<reference key="1">
    <citation type="journal article" date="2006" name="Science">
        <title>Large-scale sequence analysis of avian influenza isolates.</title>
        <authorList>
            <person name="Obenauer J.C."/>
            <person name="Denson J."/>
            <person name="Mehta P.K."/>
            <person name="Su X."/>
            <person name="Mukatira S."/>
            <person name="Finkelstein D.B."/>
            <person name="Xu X."/>
            <person name="Wang J."/>
            <person name="Ma J."/>
            <person name="Fan Y."/>
            <person name="Rakestraw K.M."/>
            <person name="Webster R.G."/>
            <person name="Hoffmann E."/>
            <person name="Krauss S."/>
            <person name="Zheng J."/>
            <person name="Zhang Z."/>
            <person name="Naeve C.W."/>
        </authorList>
    </citation>
    <scope>NUCLEOTIDE SEQUENCE [GENOMIC RNA]</scope>
</reference>
<name>RDRP_I83A5</name>
<evidence type="ECO:0000255" key="1">
    <source>
        <dbReference type="HAMAP-Rule" id="MF_04065"/>
    </source>
</evidence>
<evidence type="ECO:0000256" key="2">
    <source>
        <dbReference type="SAM" id="MobiDB-lite"/>
    </source>
</evidence>
<proteinExistence type="inferred from homology"/>
<organismHost>
    <name type="scientific">Aves</name>
    <dbReference type="NCBI Taxonomy" id="8782"/>
</organismHost>
<sequence>MDVNPTLLFLKVPAQNAISTTFPYTGDPPYSHGTGTGYTMDTVNRTHQYSERGKWTTNTETGAPQLNPIDGPLPEDNEPSGYAQTDCVLEAMAFLEESHPGIFENSCLETMEVVQQTRVDKLTQGRQTYDWTLNRNQPAATALANTIEVFRSNGLTANESGRLIDFLKDVMESMDKEEMEITTHFQRKRRVRDNMTKRMVTQRTIGKKKQRLNKRSYLIRALTLNTMTKDAERGKLKRRAIATPGMQIRGFVYFVEALARSICEKLEQSGLPVGGNEKKAKLANVVRKMMTNSQDTELSFTITGDNTKWNENQNPRMFLAMITYITRNQPEWFRNVLSIAPIMFSNKMARLGKGYMFESKSMKLRTQIPAEMLATIDLKYFNDSTRKKIEKIRPLLIDGTASLSPGMMMGMFNMLSTVLGVSILNLGQKRYTKTTYWWDGLQSSDDFALIVNAPNHEGIQAGVDRFYRTCKLVGINMSKKKSYINRTGTFEFTSFFYRYGFVANFSMELPSFGVSGINESADMSIGVTVIKNNMINNDLGPATAQMALQLFIKDYRYTYRCHRGDTQIQTRRSFEIKKLWEQTRSKAGLLVSDGGPNLYNIRNLHIPEVCLKWELMDEDYQGRLCNPLNPFVSHKEIESVNNAVVMPAHGPAKSMEYDAVATTHSWIPKRNRSILNTSQRGILEDEQMYQKCCNLFEKFFPSSSYRRPVGISSMVEAMVSRARIDARIDFESGRIKKEEFAEIMKICSTIEELRRQK</sequence>
<gene>
    <name evidence="1" type="primary">PB1</name>
</gene>
<protein>
    <recommendedName>
        <fullName evidence="1">RNA-directed RNA polymerase catalytic subunit</fullName>
        <ecNumber evidence="1">2.7.7.48</ecNumber>
    </recommendedName>
    <alternativeName>
        <fullName evidence="1">Polymerase basic protein 1</fullName>
        <shortName evidence="1">PB1</shortName>
    </alternativeName>
    <alternativeName>
        <fullName evidence="1">RNA-directed RNA polymerase subunit P1</fullName>
    </alternativeName>
</protein>
<accession>Q0A2H9</accession>
<dbReference type="EC" id="2.7.7.48" evidence="1"/>
<dbReference type="EMBL" id="CY015079">
    <property type="protein sequence ID" value="ABI85103.1"/>
    <property type="molecule type" value="Genomic_RNA"/>
</dbReference>
<dbReference type="SMR" id="Q0A2H9"/>
<dbReference type="Proteomes" id="UP000008584">
    <property type="component" value="Genome"/>
</dbReference>
<dbReference type="GO" id="GO:0030430">
    <property type="term" value="C:host cell cytoplasm"/>
    <property type="evidence" value="ECO:0007669"/>
    <property type="project" value="UniProtKB-SubCell"/>
</dbReference>
<dbReference type="GO" id="GO:0042025">
    <property type="term" value="C:host cell nucleus"/>
    <property type="evidence" value="ECO:0007669"/>
    <property type="project" value="UniProtKB-SubCell"/>
</dbReference>
<dbReference type="GO" id="GO:0000166">
    <property type="term" value="F:nucleotide binding"/>
    <property type="evidence" value="ECO:0007669"/>
    <property type="project" value="UniProtKB-UniRule"/>
</dbReference>
<dbReference type="GO" id="GO:0003723">
    <property type="term" value="F:RNA binding"/>
    <property type="evidence" value="ECO:0007669"/>
    <property type="project" value="InterPro"/>
</dbReference>
<dbReference type="GO" id="GO:0003968">
    <property type="term" value="F:RNA-directed RNA polymerase activity"/>
    <property type="evidence" value="ECO:0007669"/>
    <property type="project" value="UniProtKB-UniRule"/>
</dbReference>
<dbReference type="GO" id="GO:0006351">
    <property type="term" value="P:DNA-templated transcription"/>
    <property type="evidence" value="ECO:0007669"/>
    <property type="project" value="UniProtKB-UniRule"/>
</dbReference>
<dbReference type="GO" id="GO:0039657">
    <property type="term" value="P:symbiont-mediated suppression of host gene expression"/>
    <property type="evidence" value="ECO:0007669"/>
    <property type="project" value="UniProtKB-KW"/>
</dbReference>
<dbReference type="GO" id="GO:0039523">
    <property type="term" value="P:symbiont-mediated suppression of host mRNA transcription via inhibition of RNA polymerase II activity"/>
    <property type="evidence" value="ECO:0007669"/>
    <property type="project" value="UniProtKB-UniRule"/>
</dbReference>
<dbReference type="GO" id="GO:0039694">
    <property type="term" value="P:viral RNA genome replication"/>
    <property type="evidence" value="ECO:0007669"/>
    <property type="project" value="UniProtKB-UniRule"/>
</dbReference>
<dbReference type="GO" id="GO:0019083">
    <property type="term" value="P:viral transcription"/>
    <property type="evidence" value="ECO:0007669"/>
    <property type="project" value="UniProtKB-KW"/>
</dbReference>
<dbReference type="Gene3D" id="6.10.140.720">
    <property type="match status" value="1"/>
</dbReference>
<dbReference type="HAMAP" id="MF_04065">
    <property type="entry name" value="INFV_RDRP"/>
    <property type="match status" value="1"/>
</dbReference>
<dbReference type="InterPro" id="IPR007099">
    <property type="entry name" value="RNA-dir_pol_NSvirus"/>
</dbReference>
<dbReference type="InterPro" id="IPR001407">
    <property type="entry name" value="RNA_pol_PB1_influenza"/>
</dbReference>
<dbReference type="Pfam" id="PF00602">
    <property type="entry name" value="Flu_PB1"/>
    <property type="match status" value="1"/>
</dbReference>
<dbReference type="PIRSF" id="PIRSF000827">
    <property type="entry name" value="RdRPol_OMV"/>
    <property type="match status" value="1"/>
</dbReference>
<dbReference type="PROSITE" id="PS50525">
    <property type="entry name" value="RDRP_SSRNA_NEG_SEG"/>
    <property type="match status" value="1"/>
</dbReference>
<comment type="function">
    <text evidence="1">RNA-dependent RNA polymerase which is responsible for replication and transcription of virus RNA segments. The transcription of viral mRNAs occurs by a unique mechanism called cap-snatching. 5' methylated caps of cellular mRNAs are cleaved after 10-13 nucleotides by PA. In turn, these short capped RNAs are used as primers by PB1 for transcription of viral mRNAs. During virus replication, PB1 initiates RNA synthesis and copy vRNA into complementary RNA (cRNA) which in turn serves as a template for the production of more vRNAs.</text>
</comment>
<comment type="catalytic activity">
    <reaction evidence="1">
        <text>RNA(n) + a ribonucleoside 5'-triphosphate = RNA(n+1) + diphosphate</text>
        <dbReference type="Rhea" id="RHEA:21248"/>
        <dbReference type="Rhea" id="RHEA-COMP:14527"/>
        <dbReference type="Rhea" id="RHEA-COMP:17342"/>
        <dbReference type="ChEBI" id="CHEBI:33019"/>
        <dbReference type="ChEBI" id="CHEBI:61557"/>
        <dbReference type="ChEBI" id="CHEBI:140395"/>
        <dbReference type="EC" id="2.7.7.48"/>
    </reaction>
</comment>
<comment type="subunit">
    <text evidence="1">Influenza RNA polymerase is composed of three subunits: PB1, PB2 and PA. Interacts (via N-terminus) with PA (via C-terminus). Interacts (via C-terminus) with PB2 (via N-terminus); this interaction is essential for transcription initiation.</text>
</comment>
<comment type="subcellular location">
    <subcellularLocation>
        <location evidence="1">Host nucleus</location>
    </subcellularLocation>
    <subcellularLocation>
        <location evidence="1">Host cytoplasm</location>
    </subcellularLocation>
</comment>
<comment type="PTM">
    <text evidence="1">Phosphorylated by host PRKCA.</text>
</comment>
<comment type="similarity">
    <text evidence="1">Belongs to the influenza viruses polymerase PB1 family.</text>
</comment>
<organism>
    <name type="scientific">Influenza A virus (strain A/Chicken/Pennsylvania/1/1983 H5N2)</name>
    <dbReference type="NCBI Taxonomy" id="385586"/>
    <lineage>
        <taxon>Viruses</taxon>
        <taxon>Riboviria</taxon>
        <taxon>Orthornavirae</taxon>
        <taxon>Negarnaviricota</taxon>
        <taxon>Polyploviricotina</taxon>
        <taxon>Insthoviricetes</taxon>
        <taxon>Articulavirales</taxon>
        <taxon>Orthomyxoviridae</taxon>
        <taxon>Alphainfluenzavirus</taxon>
        <taxon>Alphainfluenzavirus influenzae</taxon>
        <taxon>Influenza A virus</taxon>
    </lineage>
</organism>
<keyword id="KW-1262">Eukaryotic host gene expression shutoff by virus</keyword>
<keyword id="KW-1191">Eukaryotic host transcription shutoff by virus</keyword>
<keyword id="KW-1035">Host cytoplasm</keyword>
<keyword id="KW-1190">Host gene expression shutoff by virus</keyword>
<keyword id="KW-1048">Host nucleus</keyword>
<keyword id="KW-0945">Host-virus interaction</keyword>
<keyword id="KW-1104">Inhibition of host RNA polymerase II by virus</keyword>
<keyword id="KW-0547">Nucleotide-binding</keyword>
<keyword id="KW-0548">Nucleotidyltransferase</keyword>
<keyword id="KW-0597">Phosphoprotein</keyword>
<keyword id="KW-0696">RNA-directed RNA polymerase</keyword>
<keyword id="KW-0808">Transferase</keyword>
<keyword id="KW-0693">Viral RNA replication</keyword>
<keyword id="KW-1195">Viral transcription</keyword>
<feature type="chain" id="PRO_0000279588" description="RNA-directed RNA polymerase catalytic subunit">
    <location>
        <begin position="1"/>
        <end position="757"/>
    </location>
</feature>
<feature type="domain" description="RdRp catalytic" evidence="1">
    <location>
        <begin position="286"/>
        <end position="483"/>
    </location>
</feature>
<feature type="region of interest" description="Disordered" evidence="2">
    <location>
        <begin position="52"/>
        <end position="82"/>
    </location>
</feature>
<feature type="region of interest" description="Promoter-binding site" evidence="1">
    <location>
        <begin position="249"/>
        <end position="256"/>
    </location>
</feature>
<feature type="short sequence motif" description="Nuclear localization signal" evidence="1">
    <location>
        <begin position="187"/>
        <end position="195"/>
    </location>
</feature>
<feature type="short sequence motif" description="Nuclear localization signal" evidence="1">
    <location>
        <begin position="203"/>
        <end position="216"/>
    </location>
</feature>
<feature type="compositionally biased region" description="Polar residues" evidence="2">
    <location>
        <begin position="55"/>
        <end position="64"/>
    </location>
</feature>